<protein>
    <recommendedName>
        <fullName evidence="1">Protein PsiE</fullName>
    </recommendedName>
</protein>
<comment type="subcellular location">
    <subcellularLocation>
        <location evidence="1">Cell inner membrane</location>
        <topology evidence="1">Multi-pass membrane protein</topology>
    </subcellularLocation>
</comment>
<comment type="similarity">
    <text evidence="1">Belongs to the PsiE family.</text>
</comment>
<name>PSIE_SALSV</name>
<keyword id="KW-0997">Cell inner membrane</keyword>
<keyword id="KW-1003">Cell membrane</keyword>
<keyword id="KW-0472">Membrane</keyword>
<keyword id="KW-0812">Transmembrane</keyword>
<keyword id="KW-1133">Transmembrane helix</keyword>
<proteinExistence type="inferred from homology"/>
<organism>
    <name type="scientific">Salmonella schwarzengrund (strain CVM19633)</name>
    <dbReference type="NCBI Taxonomy" id="439843"/>
    <lineage>
        <taxon>Bacteria</taxon>
        <taxon>Pseudomonadati</taxon>
        <taxon>Pseudomonadota</taxon>
        <taxon>Gammaproteobacteria</taxon>
        <taxon>Enterobacterales</taxon>
        <taxon>Enterobacteriaceae</taxon>
        <taxon>Salmonella</taxon>
    </lineage>
</organism>
<evidence type="ECO:0000255" key="1">
    <source>
        <dbReference type="HAMAP-Rule" id="MF_01048"/>
    </source>
</evidence>
<feature type="chain" id="PRO_1000136224" description="Protein PsiE">
    <location>
        <begin position="1"/>
        <end position="136"/>
    </location>
</feature>
<feature type="transmembrane region" description="Helical" evidence="1">
    <location>
        <begin position="15"/>
        <end position="35"/>
    </location>
</feature>
<feature type="transmembrane region" description="Helical" evidence="1">
    <location>
        <begin position="55"/>
        <end position="75"/>
    </location>
</feature>
<feature type="transmembrane region" description="Helical" evidence="1">
    <location>
        <begin position="83"/>
        <end position="103"/>
    </location>
</feature>
<feature type="transmembrane region" description="Helical" evidence="1">
    <location>
        <begin position="108"/>
        <end position="128"/>
    </location>
</feature>
<gene>
    <name evidence="1" type="primary">psiE</name>
    <name type="ordered locus">SeSA_A4417</name>
</gene>
<reference key="1">
    <citation type="journal article" date="2011" name="J. Bacteriol.">
        <title>Comparative genomics of 28 Salmonella enterica isolates: evidence for CRISPR-mediated adaptive sublineage evolution.</title>
        <authorList>
            <person name="Fricke W.F."/>
            <person name="Mammel M.K."/>
            <person name="McDermott P.F."/>
            <person name="Tartera C."/>
            <person name="White D.G."/>
            <person name="Leclerc J.E."/>
            <person name="Ravel J."/>
            <person name="Cebula T.A."/>
        </authorList>
    </citation>
    <scope>NUCLEOTIDE SEQUENCE [LARGE SCALE GENOMIC DNA]</scope>
    <source>
        <strain>CVM19633</strain>
    </source>
</reference>
<sequence>MMPLSRSRLEFIATILQNVLNLGLLTLGLILVVFLGKETVHLADALFVPEQASKYELVEGLVIYFLYFEFIALIVKYFKSGLHFPLRYFVYIGITAIVRLIIVDHKTPMDVLLYSAAILLLVITLWLCNSNRLRRE</sequence>
<dbReference type="EMBL" id="CP001127">
    <property type="protein sequence ID" value="ACF93031.1"/>
    <property type="molecule type" value="Genomic_DNA"/>
</dbReference>
<dbReference type="RefSeq" id="WP_000982752.1">
    <property type="nucleotide sequence ID" value="NC_011094.1"/>
</dbReference>
<dbReference type="SMR" id="B4TQP3"/>
<dbReference type="KEGG" id="sew:SeSA_A4417"/>
<dbReference type="HOGENOM" id="CLU_127561_0_1_6"/>
<dbReference type="Proteomes" id="UP000001865">
    <property type="component" value="Chromosome"/>
</dbReference>
<dbReference type="GO" id="GO:0005886">
    <property type="term" value="C:plasma membrane"/>
    <property type="evidence" value="ECO:0007669"/>
    <property type="project" value="UniProtKB-SubCell"/>
</dbReference>
<dbReference type="GO" id="GO:0016036">
    <property type="term" value="P:cellular response to phosphate starvation"/>
    <property type="evidence" value="ECO:0007669"/>
    <property type="project" value="InterPro"/>
</dbReference>
<dbReference type="HAMAP" id="MF_01048">
    <property type="entry name" value="PsiE"/>
    <property type="match status" value="1"/>
</dbReference>
<dbReference type="InterPro" id="IPR009315">
    <property type="entry name" value="P_starv_induced_PsiE"/>
</dbReference>
<dbReference type="InterPro" id="IPR020948">
    <property type="entry name" value="P_starv_induced_PsiE-like"/>
</dbReference>
<dbReference type="NCBIfam" id="NF002764">
    <property type="entry name" value="PRK02833.1-2"/>
    <property type="match status" value="1"/>
</dbReference>
<dbReference type="NCBIfam" id="NF002765">
    <property type="entry name" value="PRK02833.1-3"/>
    <property type="match status" value="1"/>
</dbReference>
<dbReference type="NCBIfam" id="NF002767">
    <property type="entry name" value="PRK02833.1-5"/>
    <property type="match status" value="1"/>
</dbReference>
<dbReference type="PANTHER" id="PTHR37819">
    <property type="entry name" value="PROTEIN PSIE"/>
    <property type="match status" value="1"/>
</dbReference>
<dbReference type="PANTHER" id="PTHR37819:SF1">
    <property type="entry name" value="PROTEIN PSIE"/>
    <property type="match status" value="1"/>
</dbReference>
<dbReference type="Pfam" id="PF06146">
    <property type="entry name" value="PsiE"/>
    <property type="match status" value="1"/>
</dbReference>
<dbReference type="PIRSF" id="PIRSF029598">
    <property type="entry name" value="PsiE"/>
    <property type="match status" value="1"/>
</dbReference>
<accession>B4TQP3</accession>